<organism>
    <name type="scientific">Human herpesvirus 6A (strain Uganda-1102)</name>
    <name type="common">HHV-6 variant A</name>
    <name type="synonym">Human B lymphotropic virus</name>
    <dbReference type="NCBI Taxonomy" id="10370"/>
    <lineage>
        <taxon>Viruses</taxon>
        <taxon>Duplodnaviria</taxon>
        <taxon>Heunggongvirae</taxon>
        <taxon>Peploviricota</taxon>
        <taxon>Herviviricetes</taxon>
        <taxon>Herpesvirales</taxon>
        <taxon>Orthoherpesviridae</taxon>
        <taxon>Betaherpesvirinae</taxon>
        <taxon>Roseolovirus</taxon>
        <taxon>Roseolovirus humanbeta6a</taxon>
        <taxon>Human betaherpesvirus 6A</taxon>
    </lineage>
</organism>
<comment type="function">
    <text evidence="1">Forms a portal in the viral capsid through which viral DNA is translocated during DNA packaging. Assembles as a dodecamer at a single fivefold axe of the T=16 icosahedric capsid. Binds to the molecular motor that translocates the viral DNA, termed terminase.</text>
</comment>
<comment type="subunit">
    <text evidence="1">Homododecamerizes. Interacts with terminase subunits TRM1 and TRM3.</text>
</comment>
<comment type="subcellular location">
    <subcellularLocation>
        <location evidence="1">Virion</location>
    </subcellularLocation>
    <subcellularLocation>
        <location evidence="1">Host nucleus</location>
    </subcellularLocation>
</comment>
<comment type="similarity">
    <text evidence="1">Belongs to the herpesviridae portal protein family.</text>
</comment>
<comment type="sequence caution" evidence="2">
    <conflict type="erroneous initiation">
        <sequence resource="EMBL-CDS" id="CAA58368"/>
    </conflict>
    <text>Truncated N-terminus.</text>
</comment>
<name>PORTL_HHV6U</name>
<organismHost>
    <name type="scientific">Homo sapiens</name>
    <name type="common">Human</name>
    <dbReference type="NCBI Taxonomy" id="9606"/>
</organismHost>
<dbReference type="EMBL" id="U13194">
    <property type="protein sequence ID" value="AAA68467.1"/>
    <property type="molecule type" value="Genomic_DNA"/>
</dbReference>
<dbReference type="EMBL" id="X83413">
    <property type="protein sequence ID" value="CAA58368.2"/>
    <property type="status" value="ALT_INIT"/>
    <property type="molecule type" value="Genomic_DNA"/>
</dbReference>
<dbReference type="RefSeq" id="NP_042969.2">
    <property type="nucleotide sequence ID" value="NC_001664.2"/>
</dbReference>
<dbReference type="SMR" id="P52453"/>
<dbReference type="DNASU" id="1487958"/>
<dbReference type="GeneID" id="1487958"/>
<dbReference type="KEGG" id="vg:1487958"/>
<dbReference type="Proteomes" id="UP000009295">
    <property type="component" value="Segment"/>
</dbReference>
<dbReference type="GO" id="GO:0042025">
    <property type="term" value="C:host cell nucleus"/>
    <property type="evidence" value="ECO:0007669"/>
    <property type="project" value="UniProtKB-SubCell"/>
</dbReference>
<dbReference type="GO" id="GO:0044423">
    <property type="term" value="C:virion component"/>
    <property type="evidence" value="ECO:0007669"/>
    <property type="project" value="UniProtKB-KW"/>
</dbReference>
<dbReference type="GO" id="GO:0051276">
    <property type="term" value="P:chromosome organization"/>
    <property type="evidence" value="ECO:0007669"/>
    <property type="project" value="InterPro"/>
</dbReference>
<dbReference type="HAMAP" id="MF_04012">
    <property type="entry name" value="HSV_PORTL"/>
    <property type="match status" value="1"/>
</dbReference>
<dbReference type="InterPro" id="IPR002660">
    <property type="entry name" value="Herpes_Portal"/>
</dbReference>
<dbReference type="Pfam" id="PF01763">
    <property type="entry name" value="Herpes_UL6"/>
    <property type="match status" value="1"/>
</dbReference>
<evidence type="ECO:0000255" key="1">
    <source>
        <dbReference type="HAMAP-Rule" id="MF_04012"/>
    </source>
</evidence>
<evidence type="ECO:0000305" key="2"/>
<gene>
    <name type="primary">U76</name>
    <name type="synonym">HDLF1</name>
</gene>
<protein>
    <recommendedName>
        <fullName evidence="1">Portal protein</fullName>
    </recommendedName>
</protein>
<accession>P52453</accession>
<keyword id="KW-1048">Host nucleus</keyword>
<keyword id="KW-1185">Reference proteome</keyword>
<keyword id="KW-0231">Viral genome packaging</keyword>
<keyword id="KW-1188">Viral release from host cell</keyword>
<keyword id="KW-0946">Virion</keyword>
<proteinExistence type="inferred from homology"/>
<reference key="1">
    <citation type="journal article" date="1994" name="Virology">
        <title>Nucleotide sequence analysis of a 21-kbp region of the genome of human herpesvirus-6 containing homologues of human cytomegalovirus major immediate-early and replication genes.</title>
        <authorList>
            <person name="Nicholas J."/>
        </authorList>
    </citation>
    <scope>NUCLEOTIDE SEQUENCE [GENOMIC DNA]</scope>
</reference>
<reference key="2">
    <citation type="journal article" date="1995" name="Virology">
        <title>The DNA sequence of human herpesvirus-6: structure, coding content, and genome evolution.</title>
        <authorList>
            <person name="Gompels U.A."/>
            <person name="Nicholas J."/>
            <person name="Lawrence G.L."/>
            <person name="Jones M."/>
            <person name="Thomson B.J."/>
            <person name="Martin M.E.D."/>
            <person name="Efstathiou S."/>
            <person name="Craxton M.A."/>
            <person name="Macaulay H.A."/>
        </authorList>
    </citation>
    <scope>NUCLEOTIDE SEQUENCE [LARGE SCALE GENOMIC DNA]</scope>
</reference>
<sequence length="662" mass="77235">MHRASANSLLNSVSGSMMWRNQSSGRRPSKRLSDNEATLSTINSILGAEDMLSKNLLSYLPPNNEEIDMIYPSEQIMTFIEMLHGHKNFFKGQTIHNALRDSAVLKKQIAYGVAQALLNSVSIQQIHDEWKRHVRSFPFHNKKLSFQDYFSVWAHAIKQVILGDISNIINFILQSIDNSHYNRYVDWICTVGIVPFMRTTHTAPNLYNLLQQVSSKLIHDIVRHKQNIVTPVLLGLSSVIIPDFHNIKIFRDRNSEQISCFKNKKAIAFFTYSTPYVIRNRLMLTTPLAHLSPELKKHNSLRRHQKMCQLLNTFPIKVLTTAKTDVTNKKIMDMIEKEEKSSDAKKSLIKFLLNLSDSKSKIGIRDSVEGFIQEITPSIIDQNKLMLNRGQFRKRSAIDTGERDVRDLFKKQIIKCMEEQIQTQMDEIETLKTTNQMFERKIKDLHSLLETNNDCDRYNPNLDHDLENLSLSRALNIVQRLPFTSVSIDDTRSVANSFFSQYIPDTQYADKRIDQLWEMEYMRTFRLRKNVNNQGQEESITYSNYSIELLIVPFLRRFLNIYNLESIPEEFLFLSLGEILLAIYESSKIKHYLRLVYVRELNQISEVFNLTQTHPENSEPIFDSNIFSPNPENEILEKIKRIRNLRRIQHLTRPNYPKGDQD</sequence>
<feature type="chain" id="PRO_0000115907" description="Portal protein">
    <location>
        <begin position="1"/>
        <end position="662"/>
    </location>
</feature>